<keyword id="KW-0687">Ribonucleoprotein</keyword>
<keyword id="KW-0689">Ribosomal protein</keyword>
<sequence length="103" mass="11448">MVKVIDIGRVVVKVLGREAGRKAVVVDVVDENYVLITGPKTLTGVKRRRVNINHIEPTDKKVEIKRGASDEEVIKAVEAAGLVEYMRERVKPKMLGLTKAEVK</sequence>
<reference key="1">
    <citation type="submission" date="2007-04" db="EMBL/GenBank/DDBJ databases">
        <title>Complete sequence of Pyrobaculum arsenaticum DSM 13514.</title>
        <authorList>
            <consortium name="US DOE Joint Genome Institute"/>
            <person name="Copeland A."/>
            <person name="Lucas S."/>
            <person name="Lapidus A."/>
            <person name="Barry K."/>
            <person name="Glavina del Rio T."/>
            <person name="Dalin E."/>
            <person name="Tice H."/>
            <person name="Pitluck S."/>
            <person name="Chain P."/>
            <person name="Malfatti S."/>
            <person name="Shin M."/>
            <person name="Vergez L."/>
            <person name="Schmutz J."/>
            <person name="Larimer F."/>
            <person name="Land M."/>
            <person name="Hauser L."/>
            <person name="Kyrpides N."/>
            <person name="Mikhailova N."/>
            <person name="Cozen A.E."/>
            <person name="Fitz-Gibbon S.T."/>
            <person name="House C.H."/>
            <person name="Saltikov C."/>
            <person name="Lowe T.M."/>
            <person name="Richardson P."/>
        </authorList>
    </citation>
    <scope>NUCLEOTIDE SEQUENCE [LARGE SCALE GENOMIC DNA]</scope>
    <source>
        <strain>ATCC 700994 / DSM 13514 / JCM 11321 / PZ6</strain>
    </source>
</reference>
<proteinExistence type="inferred from homology"/>
<name>RL14E_PYRAR</name>
<organism>
    <name type="scientific">Pyrobaculum arsenaticum (strain DSM 13514 / JCM 11321 / PZ6)</name>
    <dbReference type="NCBI Taxonomy" id="340102"/>
    <lineage>
        <taxon>Archaea</taxon>
        <taxon>Thermoproteota</taxon>
        <taxon>Thermoprotei</taxon>
        <taxon>Thermoproteales</taxon>
        <taxon>Thermoproteaceae</taxon>
        <taxon>Pyrobaculum</taxon>
    </lineage>
</organism>
<accession>A4WH36</accession>
<dbReference type="EMBL" id="CP000660">
    <property type="protein sequence ID" value="ABP49703.1"/>
    <property type="molecule type" value="Genomic_DNA"/>
</dbReference>
<dbReference type="RefSeq" id="WP_011899611.1">
    <property type="nucleotide sequence ID" value="NC_009376.1"/>
</dbReference>
<dbReference type="SMR" id="A4WH36"/>
<dbReference type="STRING" id="340102.Pars_0088"/>
<dbReference type="GeneID" id="5054283"/>
<dbReference type="KEGG" id="pas:Pars_0088"/>
<dbReference type="HOGENOM" id="CLU_183474_0_0_2"/>
<dbReference type="OrthoDB" id="63594at2157"/>
<dbReference type="PhylomeDB" id="A4WH36"/>
<dbReference type="Proteomes" id="UP000001567">
    <property type="component" value="Chromosome"/>
</dbReference>
<dbReference type="GO" id="GO:0022625">
    <property type="term" value="C:cytosolic large ribosomal subunit"/>
    <property type="evidence" value="ECO:0007669"/>
    <property type="project" value="TreeGrafter"/>
</dbReference>
<dbReference type="GO" id="GO:0003723">
    <property type="term" value="F:RNA binding"/>
    <property type="evidence" value="ECO:0007669"/>
    <property type="project" value="InterPro"/>
</dbReference>
<dbReference type="GO" id="GO:0003735">
    <property type="term" value="F:structural constituent of ribosome"/>
    <property type="evidence" value="ECO:0007669"/>
    <property type="project" value="InterPro"/>
</dbReference>
<dbReference type="GO" id="GO:0042273">
    <property type="term" value="P:ribosomal large subunit biogenesis"/>
    <property type="evidence" value="ECO:0007669"/>
    <property type="project" value="TreeGrafter"/>
</dbReference>
<dbReference type="GO" id="GO:0006412">
    <property type="term" value="P:translation"/>
    <property type="evidence" value="ECO:0007669"/>
    <property type="project" value="UniProtKB-UniRule"/>
</dbReference>
<dbReference type="CDD" id="cd06088">
    <property type="entry name" value="KOW_RPL14"/>
    <property type="match status" value="1"/>
</dbReference>
<dbReference type="FunFam" id="2.30.30.30:FF:000045">
    <property type="entry name" value="50S ribosomal protein L14e"/>
    <property type="match status" value="1"/>
</dbReference>
<dbReference type="Gene3D" id="2.30.30.30">
    <property type="match status" value="1"/>
</dbReference>
<dbReference type="HAMAP" id="MF_00721">
    <property type="entry name" value="Ribosomal_eL14"/>
    <property type="match status" value="1"/>
</dbReference>
<dbReference type="InterPro" id="IPR014722">
    <property type="entry name" value="Rib_uL2_dom2"/>
</dbReference>
<dbReference type="InterPro" id="IPR039660">
    <property type="entry name" value="Ribosomal_eL14"/>
</dbReference>
<dbReference type="InterPro" id="IPR023651">
    <property type="entry name" value="Ribosomal_eL14_arc"/>
</dbReference>
<dbReference type="InterPro" id="IPR041985">
    <property type="entry name" value="Ribosomal_eL14_KOW"/>
</dbReference>
<dbReference type="InterPro" id="IPR008991">
    <property type="entry name" value="Translation_prot_SH3-like_sf"/>
</dbReference>
<dbReference type="NCBIfam" id="NF003320">
    <property type="entry name" value="PRK04333.1"/>
    <property type="match status" value="1"/>
</dbReference>
<dbReference type="PANTHER" id="PTHR11127">
    <property type="entry name" value="60S RIBOSOMAL PROTEIN L14"/>
    <property type="match status" value="1"/>
</dbReference>
<dbReference type="PANTHER" id="PTHR11127:SF2">
    <property type="entry name" value="LARGE RIBOSOMAL SUBUNIT PROTEIN EL14"/>
    <property type="match status" value="1"/>
</dbReference>
<dbReference type="SUPFAM" id="SSF50104">
    <property type="entry name" value="Translation proteins SH3-like domain"/>
    <property type="match status" value="1"/>
</dbReference>
<feature type="chain" id="PRO_1000045822" description="Large ribosomal subunit protein eL14">
    <location>
        <begin position="1"/>
        <end position="103"/>
    </location>
</feature>
<gene>
    <name evidence="1" type="primary">rpl14e</name>
    <name type="ordered locus">Pars_0088</name>
</gene>
<comment type="similarity">
    <text evidence="1">Belongs to the eukaryotic ribosomal protein eL14 family.</text>
</comment>
<protein>
    <recommendedName>
        <fullName evidence="1">Large ribosomal subunit protein eL14</fullName>
    </recommendedName>
    <alternativeName>
        <fullName evidence="2">50S ribosomal protein L14e</fullName>
    </alternativeName>
</protein>
<evidence type="ECO:0000255" key="1">
    <source>
        <dbReference type="HAMAP-Rule" id="MF_00721"/>
    </source>
</evidence>
<evidence type="ECO:0000305" key="2"/>